<evidence type="ECO:0000255" key="1">
    <source>
        <dbReference type="HAMAP-Rule" id="MF_01152"/>
    </source>
</evidence>
<name>DNAJ_PSEAE</name>
<reference key="1">
    <citation type="journal article" date="2000" name="Nature">
        <title>Complete genome sequence of Pseudomonas aeruginosa PAO1, an opportunistic pathogen.</title>
        <authorList>
            <person name="Stover C.K."/>
            <person name="Pham X.-Q.T."/>
            <person name="Erwin A.L."/>
            <person name="Mizoguchi S.D."/>
            <person name="Warrener P."/>
            <person name="Hickey M.J."/>
            <person name="Brinkman F.S.L."/>
            <person name="Hufnagle W.O."/>
            <person name="Kowalik D.J."/>
            <person name="Lagrou M."/>
            <person name="Garber R.L."/>
            <person name="Goltry L."/>
            <person name="Tolentino E."/>
            <person name="Westbrock-Wadman S."/>
            <person name="Yuan Y."/>
            <person name="Brody L.L."/>
            <person name="Coulter S.N."/>
            <person name="Folger K.R."/>
            <person name="Kas A."/>
            <person name="Larbig K."/>
            <person name="Lim R.M."/>
            <person name="Smith K.A."/>
            <person name="Spencer D.H."/>
            <person name="Wong G.K.-S."/>
            <person name="Wu Z."/>
            <person name="Paulsen I.T."/>
            <person name="Reizer J."/>
            <person name="Saier M.H. Jr."/>
            <person name="Hancock R.E.W."/>
            <person name="Lory S."/>
            <person name="Olson M.V."/>
        </authorList>
    </citation>
    <scope>NUCLEOTIDE SEQUENCE [LARGE SCALE GENOMIC DNA]</scope>
    <source>
        <strain>ATCC 15692 / DSM 22644 / CIP 104116 / JCM 14847 / LMG 12228 / 1C / PRS 101 / PAO1</strain>
    </source>
</reference>
<gene>
    <name evidence="1" type="primary">dnaJ</name>
    <name type="ordered locus">PA4760</name>
</gene>
<organism>
    <name type="scientific">Pseudomonas aeruginosa (strain ATCC 15692 / DSM 22644 / CIP 104116 / JCM 14847 / LMG 12228 / 1C / PRS 101 / PAO1)</name>
    <dbReference type="NCBI Taxonomy" id="208964"/>
    <lineage>
        <taxon>Bacteria</taxon>
        <taxon>Pseudomonadati</taxon>
        <taxon>Pseudomonadota</taxon>
        <taxon>Gammaproteobacteria</taxon>
        <taxon>Pseudomonadales</taxon>
        <taxon>Pseudomonadaceae</taxon>
        <taxon>Pseudomonas</taxon>
    </lineage>
</organism>
<keyword id="KW-0143">Chaperone</keyword>
<keyword id="KW-0963">Cytoplasm</keyword>
<keyword id="KW-0235">DNA replication</keyword>
<keyword id="KW-0479">Metal-binding</keyword>
<keyword id="KW-1185">Reference proteome</keyword>
<keyword id="KW-0677">Repeat</keyword>
<keyword id="KW-0346">Stress response</keyword>
<keyword id="KW-0862">Zinc</keyword>
<keyword id="KW-0863">Zinc-finger</keyword>
<protein>
    <recommendedName>
        <fullName evidence="1">Chaperone protein DnaJ</fullName>
    </recommendedName>
</protein>
<proteinExistence type="inferred from homology"/>
<comment type="function">
    <text evidence="1">Participates actively in the response to hyperosmotic and heat shock by preventing the aggregation of stress-denatured proteins and by disaggregating proteins, also in an autonomous, DnaK-independent fashion. Unfolded proteins bind initially to DnaJ; upon interaction with the DnaJ-bound protein, DnaK hydrolyzes its bound ATP, resulting in the formation of a stable complex. GrpE releases ADP from DnaK; ATP binding to DnaK triggers the release of the substrate protein, thus completing the reaction cycle. Several rounds of ATP-dependent interactions between DnaJ, DnaK and GrpE are required for fully efficient folding. Also involved, together with DnaK and GrpE, in the DNA replication of plasmids through activation of initiation proteins.</text>
</comment>
<comment type="cofactor">
    <cofactor evidence="1">
        <name>Zn(2+)</name>
        <dbReference type="ChEBI" id="CHEBI:29105"/>
    </cofactor>
    <text evidence="1">Binds 2 Zn(2+) ions per monomer.</text>
</comment>
<comment type="subunit">
    <text evidence="1">Homodimer.</text>
</comment>
<comment type="subcellular location">
    <subcellularLocation>
        <location evidence="1">Cytoplasm</location>
    </subcellularLocation>
</comment>
<comment type="domain">
    <text evidence="1">The J domain is necessary and sufficient to stimulate DnaK ATPase activity. Zinc center 1 plays an important role in the autonomous, DnaK-independent chaperone activity of DnaJ. Zinc center 2 is essential for interaction with DnaK and for DnaJ activity.</text>
</comment>
<comment type="similarity">
    <text evidence="1">Belongs to the DnaJ family.</text>
</comment>
<dbReference type="EMBL" id="AE004091">
    <property type="protein sequence ID" value="AAG08146.1"/>
    <property type="molecule type" value="Genomic_DNA"/>
</dbReference>
<dbReference type="PIR" id="A83052">
    <property type="entry name" value="A83052"/>
</dbReference>
<dbReference type="RefSeq" id="NP_253448.1">
    <property type="nucleotide sequence ID" value="NC_002516.2"/>
</dbReference>
<dbReference type="RefSeq" id="WP_003095211.1">
    <property type="nucleotide sequence ID" value="NZ_QZGE01000018.1"/>
</dbReference>
<dbReference type="SMR" id="Q9HV44"/>
<dbReference type="FunCoup" id="Q9HV44">
    <property type="interactions" value="823"/>
</dbReference>
<dbReference type="STRING" id="208964.PA4760"/>
<dbReference type="PaxDb" id="208964-PA4760"/>
<dbReference type="GeneID" id="881760"/>
<dbReference type="KEGG" id="pae:PA4760"/>
<dbReference type="PATRIC" id="fig|208964.12.peg.4986"/>
<dbReference type="PseudoCAP" id="PA4760"/>
<dbReference type="HOGENOM" id="CLU_017633_0_7_6"/>
<dbReference type="InParanoid" id="Q9HV44"/>
<dbReference type="OrthoDB" id="9779889at2"/>
<dbReference type="PhylomeDB" id="Q9HV44"/>
<dbReference type="BioCyc" id="PAER208964:G1FZ6-4873-MONOMER"/>
<dbReference type="PHI-base" id="PHI:10485"/>
<dbReference type="Proteomes" id="UP000002438">
    <property type="component" value="Chromosome"/>
</dbReference>
<dbReference type="GO" id="GO:0005737">
    <property type="term" value="C:cytoplasm"/>
    <property type="evidence" value="ECO:0000318"/>
    <property type="project" value="GO_Central"/>
</dbReference>
<dbReference type="GO" id="GO:0005524">
    <property type="term" value="F:ATP binding"/>
    <property type="evidence" value="ECO:0007669"/>
    <property type="project" value="InterPro"/>
</dbReference>
<dbReference type="GO" id="GO:0031072">
    <property type="term" value="F:heat shock protein binding"/>
    <property type="evidence" value="ECO:0007669"/>
    <property type="project" value="InterPro"/>
</dbReference>
<dbReference type="GO" id="GO:0051082">
    <property type="term" value="F:unfolded protein binding"/>
    <property type="evidence" value="ECO:0000318"/>
    <property type="project" value="GO_Central"/>
</dbReference>
<dbReference type="GO" id="GO:0008270">
    <property type="term" value="F:zinc ion binding"/>
    <property type="evidence" value="ECO:0007669"/>
    <property type="project" value="UniProtKB-UniRule"/>
</dbReference>
<dbReference type="GO" id="GO:0051085">
    <property type="term" value="P:chaperone cofactor-dependent protein refolding"/>
    <property type="evidence" value="ECO:0000318"/>
    <property type="project" value="GO_Central"/>
</dbReference>
<dbReference type="GO" id="GO:0006260">
    <property type="term" value="P:DNA replication"/>
    <property type="evidence" value="ECO:0007669"/>
    <property type="project" value="UniProtKB-KW"/>
</dbReference>
<dbReference type="GO" id="GO:0042026">
    <property type="term" value="P:protein refolding"/>
    <property type="evidence" value="ECO:0000318"/>
    <property type="project" value="GO_Central"/>
</dbReference>
<dbReference type="GO" id="GO:0009408">
    <property type="term" value="P:response to heat"/>
    <property type="evidence" value="ECO:0007669"/>
    <property type="project" value="InterPro"/>
</dbReference>
<dbReference type="CDD" id="cd06257">
    <property type="entry name" value="DnaJ"/>
    <property type="match status" value="1"/>
</dbReference>
<dbReference type="CDD" id="cd10747">
    <property type="entry name" value="DnaJ_C"/>
    <property type="match status" value="1"/>
</dbReference>
<dbReference type="CDD" id="cd10719">
    <property type="entry name" value="DnaJ_zf"/>
    <property type="match status" value="1"/>
</dbReference>
<dbReference type="FunFam" id="1.10.287.110:FF:000051">
    <property type="entry name" value="Molecular chaperone DnaJ"/>
    <property type="match status" value="1"/>
</dbReference>
<dbReference type="FunFam" id="2.10.230.10:FF:000002">
    <property type="entry name" value="Molecular chaperone DnaJ"/>
    <property type="match status" value="1"/>
</dbReference>
<dbReference type="FunFam" id="2.60.260.20:FF:000004">
    <property type="entry name" value="Molecular chaperone DnaJ"/>
    <property type="match status" value="1"/>
</dbReference>
<dbReference type="Gene3D" id="1.10.287.110">
    <property type="entry name" value="DnaJ domain"/>
    <property type="match status" value="1"/>
</dbReference>
<dbReference type="Gene3D" id="2.10.230.10">
    <property type="entry name" value="Heat shock protein DnaJ, cysteine-rich domain"/>
    <property type="match status" value="1"/>
</dbReference>
<dbReference type="Gene3D" id="2.60.260.20">
    <property type="entry name" value="Urease metallochaperone UreE, N-terminal domain"/>
    <property type="match status" value="2"/>
</dbReference>
<dbReference type="HAMAP" id="MF_01152">
    <property type="entry name" value="DnaJ"/>
    <property type="match status" value="1"/>
</dbReference>
<dbReference type="InterPro" id="IPR012724">
    <property type="entry name" value="DnaJ"/>
</dbReference>
<dbReference type="InterPro" id="IPR002939">
    <property type="entry name" value="DnaJ_C"/>
</dbReference>
<dbReference type="InterPro" id="IPR001623">
    <property type="entry name" value="DnaJ_domain"/>
</dbReference>
<dbReference type="InterPro" id="IPR018253">
    <property type="entry name" value="DnaJ_domain_CS"/>
</dbReference>
<dbReference type="InterPro" id="IPR008971">
    <property type="entry name" value="HSP40/DnaJ_pept-bd"/>
</dbReference>
<dbReference type="InterPro" id="IPR001305">
    <property type="entry name" value="HSP_DnaJ_Cys-rich_dom"/>
</dbReference>
<dbReference type="InterPro" id="IPR036410">
    <property type="entry name" value="HSP_DnaJ_Cys-rich_dom_sf"/>
</dbReference>
<dbReference type="InterPro" id="IPR036869">
    <property type="entry name" value="J_dom_sf"/>
</dbReference>
<dbReference type="NCBIfam" id="TIGR02349">
    <property type="entry name" value="DnaJ_bact"/>
    <property type="match status" value="1"/>
</dbReference>
<dbReference type="NCBIfam" id="NF008035">
    <property type="entry name" value="PRK10767.1"/>
    <property type="match status" value="1"/>
</dbReference>
<dbReference type="PANTHER" id="PTHR43096:SF48">
    <property type="entry name" value="CHAPERONE PROTEIN DNAJ"/>
    <property type="match status" value="1"/>
</dbReference>
<dbReference type="PANTHER" id="PTHR43096">
    <property type="entry name" value="DNAJ HOMOLOG 1, MITOCHONDRIAL-RELATED"/>
    <property type="match status" value="1"/>
</dbReference>
<dbReference type="Pfam" id="PF00226">
    <property type="entry name" value="DnaJ"/>
    <property type="match status" value="1"/>
</dbReference>
<dbReference type="Pfam" id="PF01556">
    <property type="entry name" value="DnaJ_C"/>
    <property type="match status" value="1"/>
</dbReference>
<dbReference type="Pfam" id="PF00684">
    <property type="entry name" value="DnaJ_CXXCXGXG"/>
    <property type="match status" value="1"/>
</dbReference>
<dbReference type="PRINTS" id="PR00625">
    <property type="entry name" value="JDOMAIN"/>
</dbReference>
<dbReference type="SMART" id="SM00271">
    <property type="entry name" value="DnaJ"/>
    <property type="match status" value="1"/>
</dbReference>
<dbReference type="SUPFAM" id="SSF46565">
    <property type="entry name" value="Chaperone J-domain"/>
    <property type="match status" value="1"/>
</dbReference>
<dbReference type="SUPFAM" id="SSF57938">
    <property type="entry name" value="DnaJ/Hsp40 cysteine-rich domain"/>
    <property type="match status" value="1"/>
</dbReference>
<dbReference type="SUPFAM" id="SSF49493">
    <property type="entry name" value="HSP40/DnaJ peptide-binding domain"/>
    <property type="match status" value="2"/>
</dbReference>
<dbReference type="PROSITE" id="PS00636">
    <property type="entry name" value="DNAJ_1"/>
    <property type="match status" value="1"/>
</dbReference>
<dbReference type="PROSITE" id="PS50076">
    <property type="entry name" value="DNAJ_2"/>
    <property type="match status" value="1"/>
</dbReference>
<dbReference type="PROSITE" id="PS51188">
    <property type="entry name" value="ZF_CR"/>
    <property type="match status" value="1"/>
</dbReference>
<sequence>MAKRDFYEVLGVERGASEADLKKAYRRLAMKYHPDRNPGDKEAEDKFKEANEAYEVLSDASKRAAYDQYGHAGVDPNMGGGAGAGFGGASFSDIFGDVFSDFFGGGGARGGSRGGAQRGADLRYTLDLDLEEAVRGTTVTIRVPTLVGCKTCNGSGAKPGTTPVTCTTCGGIGQVRMQQGFFSVQQTCPRCHGTGKMISDPCGSCHGQGRVEEQKTLSVKVPAGVDTGDRIRLTGEGEAGSMGGPAGDLYVVVNVREHPIFQRDGKHLYCEVPISFADAALGGELEVPTLDGRVKLKIPESTQTGKLFRLRGKGVAPVRGGGAGDLMCKVVVETPVNLDKRQRELLEEFRKSLQSDTSHSPKASGWFEGMKRFFDDL</sequence>
<accession>Q9HV44</accession>
<feature type="chain" id="PRO_0000070858" description="Chaperone protein DnaJ">
    <location>
        <begin position="1"/>
        <end position="377"/>
    </location>
</feature>
<feature type="domain" description="J" evidence="1">
    <location>
        <begin position="5"/>
        <end position="70"/>
    </location>
</feature>
<feature type="repeat" description="CXXCXGXG motif">
    <location>
        <begin position="149"/>
        <end position="156"/>
    </location>
</feature>
<feature type="repeat" description="CXXCXGXG motif">
    <location>
        <begin position="166"/>
        <end position="173"/>
    </location>
</feature>
<feature type="repeat" description="CXXCXGXG motif">
    <location>
        <begin position="188"/>
        <end position="195"/>
    </location>
</feature>
<feature type="repeat" description="CXXCXGXG motif">
    <location>
        <begin position="202"/>
        <end position="209"/>
    </location>
</feature>
<feature type="zinc finger region" description="CR-type" evidence="1">
    <location>
        <begin position="136"/>
        <end position="214"/>
    </location>
</feature>
<feature type="binding site" evidence="1">
    <location>
        <position position="149"/>
    </location>
    <ligand>
        <name>Zn(2+)</name>
        <dbReference type="ChEBI" id="CHEBI:29105"/>
        <label>1</label>
    </ligand>
</feature>
<feature type="binding site" evidence="1">
    <location>
        <position position="152"/>
    </location>
    <ligand>
        <name>Zn(2+)</name>
        <dbReference type="ChEBI" id="CHEBI:29105"/>
        <label>1</label>
    </ligand>
</feature>
<feature type="binding site" evidence="1">
    <location>
        <position position="166"/>
    </location>
    <ligand>
        <name>Zn(2+)</name>
        <dbReference type="ChEBI" id="CHEBI:29105"/>
        <label>2</label>
    </ligand>
</feature>
<feature type="binding site" evidence="1">
    <location>
        <position position="169"/>
    </location>
    <ligand>
        <name>Zn(2+)</name>
        <dbReference type="ChEBI" id="CHEBI:29105"/>
        <label>2</label>
    </ligand>
</feature>
<feature type="binding site" evidence="1">
    <location>
        <position position="188"/>
    </location>
    <ligand>
        <name>Zn(2+)</name>
        <dbReference type="ChEBI" id="CHEBI:29105"/>
        <label>2</label>
    </ligand>
</feature>
<feature type="binding site" evidence="1">
    <location>
        <position position="191"/>
    </location>
    <ligand>
        <name>Zn(2+)</name>
        <dbReference type="ChEBI" id="CHEBI:29105"/>
        <label>2</label>
    </ligand>
</feature>
<feature type="binding site" evidence="1">
    <location>
        <position position="202"/>
    </location>
    <ligand>
        <name>Zn(2+)</name>
        <dbReference type="ChEBI" id="CHEBI:29105"/>
        <label>1</label>
    </ligand>
</feature>
<feature type="binding site" evidence="1">
    <location>
        <position position="205"/>
    </location>
    <ligand>
        <name>Zn(2+)</name>
        <dbReference type="ChEBI" id="CHEBI:29105"/>
        <label>1</label>
    </ligand>
</feature>